<proteinExistence type="inferred from homology"/>
<feature type="chain" id="PRO_0000277093" description="Large ribosomal subunit protein uL2cy">
    <location>
        <begin position="1"/>
        <end position="273"/>
    </location>
</feature>
<feature type="region of interest" description="Disordered" evidence="3">
    <location>
        <begin position="1"/>
        <end position="27"/>
    </location>
</feature>
<feature type="region of interest" description="Disordered" evidence="3">
    <location>
        <begin position="224"/>
        <end position="273"/>
    </location>
</feature>
<reference key="1">
    <citation type="journal article" date="2006" name="BMC Evol. Biol.">
        <title>Complete plastid genome sequences of Drimys, Liriodendron, and Piper: implications for the phylogenetic relationships of magnoliids.</title>
        <authorList>
            <person name="Cai Z."/>
            <person name="Penaflor C."/>
            <person name="Kuehl J.V."/>
            <person name="Leebens-Mack J."/>
            <person name="Carlson J.E."/>
            <person name="dePamphilis C.W."/>
            <person name="Boore J.L."/>
            <person name="Jansen R.K."/>
        </authorList>
    </citation>
    <scope>NUCLEOTIDE SEQUENCE [LARGE SCALE GENOMIC DNA]</scope>
</reference>
<dbReference type="EMBL" id="DQ899947">
    <property type="protein sequence ID" value="ABI32550.1"/>
    <property type="molecule type" value="Genomic_DNA"/>
</dbReference>
<dbReference type="SMR" id="Q0G9H8"/>
<dbReference type="GO" id="GO:0009507">
    <property type="term" value="C:chloroplast"/>
    <property type="evidence" value="ECO:0007669"/>
    <property type="project" value="UniProtKB-SubCell"/>
</dbReference>
<dbReference type="GO" id="GO:0005762">
    <property type="term" value="C:mitochondrial large ribosomal subunit"/>
    <property type="evidence" value="ECO:0007669"/>
    <property type="project" value="TreeGrafter"/>
</dbReference>
<dbReference type="GO" id="GO:0019843">
    <property type="term" value="F:rRNA binding"/>
    <property type="evidence" value="ECO:0007669"/>
    <property type="project" value="UniProtKB-UniRule"/>
</dbReference>
<dbReference type="GO" id="GO:0003735">
    <property type="term" value="F:structural constituent of ribosome"/>
    <property type="evidence" value="ECO:0007669"/>
    <property type="project" value="InterPro"/>
</dbReference>
<dbReference type="GO" id="GO:0016740">
    <property type="term" value="F:transferase activity"/>
    <property type="evidence" value="ECO:0007669"/>
    <property type="project" value="InterPro"/>
</dbReference>
<dbReference type="GO" id="GO:0032543">
    <property type="term" value="P:mitochondrial translation"/>
    <property type="evidence" value="ECO:0007669"/>
    <property type="project" value="TreeGrafter"/>
</dbReference>
<dbReference type="FunFam" id="4.10.950.10:FF:000001">
    <property type="entry name" value="50S ribosomal protein L2"/>
    <property type="match status" value="1"/>
</dbReference>
<dbReference type="FunFam" id="2.30.30.30:FF:000008">
    <property type="entry name" value="50S ribosomal protein L2, chloroplastic"/>
    <property type="match status" value="1"/>
</dbReference>
<dbReference type="FunFam" id="2.40.50.140:FF:000029">
    <property type="entry name" value="50S ribosomal protein L2, chloroplastic"/>
    <property type="match status" value="1"/>
</dbReference>
<dbReference type="Gene3D" id="2.30.30.30">
    <property type="match status" value="1"/>
</dbReference>
<dbReference type="Gene3D" id="2.40.50.140">
    <property type="entry name" value="Nucleic acid-binding proteins"/>
    <property type="match status" value="1"/>
</dbReference>
<dbReference type="Gene3D" id="4.10.950.10">
    <property type="entry name" value="Ribosomal protein L2, domain 3"/>
    <property type="match status" value="1"/>
</dbReference>
<dbReference type="HAMAP" id="MF_01320_B">
    <property type="entry name" value="Ribosomal_uL2_B"/>
    <property type="match status" value="1"/>
</dbReference>
<dbReference type="InterPro" id="IPR012340">
    <property type="entry name" value="NA-bd_OB-fold"/>
</dbReference>
<dbReference type="InterPro" id="IPR014722">
    <property type="entry name" value="Rib_uL2_dom2"/>
</dbReference>
<dbReference type="InterPro" id="IPR002171">
    <property type="entry name" value="Ribosomal_uL2"/>
</dbReference>
<dbReference type="InterPro" id="IPR005880">
    <property type="entry name" value="Ribosomal_uL2_bac/org-type"/>
</dbReference>
<dbReference type="InterPro" id="IPR022669">
    <property type="entry name" value="Ribosomal_uL2_C"/>
</dbReference>
<dbReference type="InterPro" id="IPR022671">
    <property type="entry name" value="Ribosomal_uL2_CS"/>
</dbReference>
<dbReference type="InterPro" id="IPR014726">
    <property type="entry name" value="Ribosomal_uL2_dom3"/>
</dbReference>
<dbReference type="InterPro" id="IPR022666">
    <property type="entry name" value="Ribosomal_uL2_RNA-bd_dom"/>
</dbReference>
<dbReference type="InterPro" id="IPR008991">
    <property type="entry name" value="Translation_prot_SH3-like_sf"/>
</dbReference>
<dbReference type="NCBIfam" id="TIGR01171">
    <property type="entry name" value="rplB_bact"/>
    <property type="match status" value="1"/>
</dbReference>
<dbReference type="PANTHER" id="PTHR13691:SF5">
    <property type="entry name" value="LARGE RIBOSOMAL SUBUNIT PROTEIN UL2M"/>
    <property type="match status" value="1"/>
</dbReference>
<dbReference type="PANTHER" id="PTHR13691">
    <property type="entry name" value="RIBOSOMAL PROTEIN L2"/>
    <property type="match status" value="1"/>
</dbReference>
<dbReference type="Pfam" id="PF00181">
    <property type="entry name" value="Ribosomal_L2"/>
    <property type="match status" value="1"/>
</dbReference>
<dbReference type="Pfam" id="PF03947">
    <property type="entry name" value="Ribosomal_L2_C"/>
    <property type="match status" value="1"/>
</dbReference>
<dbReference type="PIRSF" id="PIRSF002158">
    <property type="entry name" value="Ribosomal_L2"/>
    <property type="match status" value="1"/>
</dbReference>
<dbReference type="SMART" id="SM01383">
    <property type="entry name" value="Ribosomal_L2"/>
    <property type="match status" value="1"/>
</dbReference>
<dbReference type="SMART" id="SM01382">
    <property type="entry name" value="Ribosomal_L2_C"/>
    <property type="match status" value="1"/>
</dbReference>
<dbReference type="SUPFAM" id="SSF50249">
    <property type="entry name" value="Nucleic acid-binding proteins"/>
    <property type="match status" value="1"/>
</dbReference>
<dbReference type="SUPFAM" id="SSF50104">
    <property type="entry name" value="Translation proteins SH3-like domain"/>
    <property type="match status" value="1"/>
</dbReference>
<dbReference type="PROSITE" id="PS00467">
    <property type="entry name" value="RIBOSOMAL_L2"/>
    <property type="match status" value="1"/>
</dbReference>
<protein>
    <recommendedName>
        <fullName evidence="2">Large ribosomal subunit protein uL2cy</fullName>
    </recommendedName>
    <alternativeName>
        <fullName evidence="4">50S ribosomal protein L2-B, chloroplastic</fullName>
    </alternativeName>
</protein>
<comment type="subunit">
    <text evidence="1">Part of the 50S ribosomal subunit.</text>
</comment>
<comment type="subcellular location">
    <subcellularLocation>
        <location>Plastid</location>
        <location>Chloroplast</location>
    </subcellularLocation>
</comment>
<comment type="similarity">
    <text evidence="4">Belongs to the universal ribosomal protein uL2 family.</text>
</comment>
<comment type="caution">
    <text evidence="4">There is 1 gene for this protein in each of the chloroplast inverted repeats; while they are usually identical, in this organism they are not. The other copy is AC Q0G9F5.</text>
</comment>
<evidence type="ECO:0000250" key="1"/>
<evidence type="ECO:0000255" key="2">
    <source>
        <dbReference type="HAMAP-Rule" id="MF_01320"/>
    </source>
</evidence>
<evidence type="ECO:0000256" key="3">
    <source>
        <dbReference type="SAM" id="MobiDB-lite"/>
    </source>
</evidence>
<evidence type="ECO:0000305" key="4"/>
<organism>
    <name type="scientific">Liriodendron tulipifera</name>
    <name type="common">Tuliptree</name>
    <name type="synonym">Tulip poplar</name>
    <dbReference type="NCBI Taxonomy" id="3415"/>
    <lineage>
        <taxon>Eukaryota</taxon>
        <taxon>Viridiplantae</taxon>
        <taxon>Streptophyta</taxon>
        <taxon>Embryophyta</taxon>
        <taxon>Tracheophyta</taxon>
        <taxon>Spermatophyta</taxon>
        <taxon>Magnoliopsida</taxon>
        <taxon>Magnoliidae</taxon>
        <taxon>Magnoliales</taxon>
        <taxon>Magnoliaceae</taxon>
        <taxon>Liriodendron</taxon>
    </lineage>
</organism>
<sequence length="273" mass="29587">MAIHLYKTSTPSTRNGAVDSQVKSNPRNNLIHGQHHCGKGRNARGIITAGHRGGGHKRLYRKIDFRRNEKDTSGRIVTIEYDPNRNAYICLIHYGDGEKRYILHPRGAIIGDTIVSGTEVPISMGNALPLTDMPLGTAIHNIEITLGKGGQLARAAGAVAKLIAKEGKSATLRLPSGEVRLISKNCSATVGQVGNVGVNQKSLGRAGSKCWLGKRPVVRGVVMNPVDHPHGGGEGRAPIGRKKPTTPWGYPALGRRSRKRNKYSDSLILRRRK</sequence>
<keyword id="KW-0150">Chloroplast</keyword>
<keyword id="KW-0934">Plastid</keyword>
<keyword id="KW-0687">Ribonucleoprotein</keyword>
<keyword id="KW-0689">Ribosomal protein</keyword>
<gene>
    <name type="primary">rpl2-B</name>
</gene>
<name>RK2B_LIRTU</name>
<accession>Q0G9H8</accession>
<geneLocation type="chloroplast"/>